<accession>Q8BZ64</accession>
<accession>Q3UMP0</accession>
<accession>Q8BUE2</accession>
<name>TECT1_MOUSE</name>
<dbReference type="EMBL" id="DQ278867">
    <property type="protein sequence ID" value="ABB90559.1"/>
    <property type="molecule type" value="mRNA"/>
</dbReference>
<dbReference type="EMBL" id="AK036568">
    <property type="protein sequence ID" value="BAC29481.1"/>
    <property type="molecule type" value="mRNA"/>
</dbReference>
<dbReference type="EMBL" id="AK085676">
    <property type="protein sequence ID" value="BAC39502.1"/>
    <property type="molecule type" value="mRNA"/>
</dbReference>
<dbReference type="EMBL" id="AK144772">
    <property type="protein sequence ID" value="BAE26058.1"/>
    <property type="status" value="ALT_FRAME"/>
    <property type="molecule type" value="mRNA"/>
</dbReference>
<dbReference type="CCDS" id="CCDS39254.1">
    <molecule id="Q8BZ64-1"/>
</dbReference>
<dbReference type="RefSeq" id="NP_001034242.2">
    <molecule id="Q8BZ64-1"/>
    <property type="nucleotide sequence ID" value="NM_001039153.3"/>
</dbReference>
<dbReference type="BioGRID" id="576601">
    <property type="interactions" value="2"/>
</dbReference>
<dbReference type="CORUM" id="Q8BZ64"/>
<dbReference type="FunCoup" id="Q8BZ64">
    <property type="interactions" value="656"/>
</dbReference>
<dbReference type="IntAct" id="Q8BZ64">
    <property type="interactions" value="5"/>
</dbReference>
<dbReference type="STRING" id="10090.ENSMUSP00000107367"/>
<dbReference type="GlyCosmos" id="Q8BZ64">
    <property type="glycosylation" value="3 sites, No reported glycans"/>
</dbReference>
<dbReference type="GlyGen" id="Q8BZ64">
    <property type="glycosylation" value="6 sites, 2 N-linked glycans (3 sites)"/>
</dbReference>
<dbReference type="iPTMnet" id="Q8BZ64"/>
<dbReference type="PhosphoSitePlus" id="Q8BZ64"/>
<dbReference type="PaxDb" id="10090-ENSMUSP00000107367"/>
<dbReference type="ProteomicsDB" id="259372">
    <molecule id="Q8BZ64-1"/>
</dbReference>
<dbReference type="ProteomicsDB" id="259373">
    <molecule id="Q8BZ64-2"/>
</dbReference>
<dbReference type="Antibodypedia" id="45260">
    <property type="antibodies" value="87 antibodies from 26 providers"/>
</dbReference>
<dbReference type="DNASU" id="654470"/>
<dbReference type="Ensembl" id="ENSMUST00000111738.8">
    <molecule id="Q8BZ64-1"/>
    <property type="protein sequence ID" value="ENSMUSP00000107367.4"/>
    <property type="gene ID" value="ENSMUSG00000038593.19"/>
</dbReference>
<dbReference type="GeneID" id="654470"/>
<dbReference type="KEGG" id="mmu:654470"/>
<dbReference type="UCSC" id="uc012ecz.1">
    <molecule id="Q8BZ64-2"/>
    <property type="organism name" value="mouse"/>
</dbReference>
<dbReference type="UCSC" id="uc033ilv.2">
    <molecule id="Q8BZ64-1"/>
    <property type="organism name" value="mouse"/>
</dbReference>
<dbReference type="AGR" id="MGI:3603820"/>
<dbReference type="CTD" id="79600"/>
<dbReference type="MGI" id="MGI:3603820">
    <property type="gene designation" value="Tctn1"/>
</dbReference>
<dbReference type="VEuPathDB" id="HostDB:ENSMUSG00000038593"/>
<dbReference type="eggNOG" id="ENOG502QUK6">
    <property type="taxonomic scope" value="Eukaryota"/>
</dbReference>
<dbReference type="GeneTree" id="ENSGT00570000079101"/>
<dbReference type="HOGENOM" id="CLU_016974_0_1_1"/>
<dbReference type="InParanoid" id="Q8BZ64"/>
<dbReference type="OMA" id="AGDVKIC"/>
<dbReference type="OrthoDB" id="2104337at2759"/>
<dbReference type="PhylomeDB" id="Q8BZ64"/>
<dbReference type="TreeFam" id="TF329169"/>
<dbReference type="Reactome" id="R-MMU-5620912">
    <property type="pathway name" value="Anchoring of the basal body to the plasma membrane"/>
</dbReference>
<dbReference type="BioGRID-ORCS" id="654470">
    <property type="hits" value="3 hits in 77 CRISPR screens"/>
</dbReference>
<dbReference type="ChiTaRS" id="Tctn1">
    <property type="organism name" value="mouse"/>
</dbReference>
<dbReference type="PRO" id="PR:Q8BZ64"/>
<dbReference type="Proteomes" id="UP000000589">
    <property type="component" value="Chromosome 5"/>
</dbReference>
<dbReference type="RNAct" id="Q8BZ64">
    <property type="molecule type" value="protein"/>
</dbReference>
<dbReference type="Bgee" id="ENSMUSG00000038593">
    <property type="expression patterns" value="Expressed in spermatocyte and 207 other cell types or tissues"/>
</dbReference>
<dbReference type="ExpressionAtlas" id="Q8BZ64">
    <property type="expression patterns" value="baseline and differential"/>
</dbReference>
<dbReference type="GO" id="GO:0035869">
    <property type="term" value="C:ciliary transition zone"/>
    <property type="evidence" value="ECO:0000315"/>
    <property type="project" value="UniProtKB"/>
</dbReference>
<dbReference type="GO" id="GO:0005737">
    <property type="term" value="C:cytoplasm"/>
    <property type="evidence" value="ECO:0007669"/>
    <property type="project" value="UniProtKB-KW"/>
</dbReference>
<dbReference type="GO" id="GO:0005856">
    <property type="term" value="C:cytoskeleton"/>
    <property type="evidence" value="ECO:0007669"/>
    <property type="project" value="UniProtKB-KW"/>
</dbReference>
<dbReference type="GO" id="GO:0005615">
    <property type="term" value="C:extracellular space"/>
    <property type="evidence" value="ECO:0000314"/>
    <property type="project" value="MGI"/>
</dbReference>
<dbReference type="GO" id="GO:0016020">
    <property type="term" value="C:membrane"/>
    <property type="evidence" value="ECO:0000314"/>
    <property type="project" value="MGI"/>
</dbReference>
<dbReference type="GO" id="GO:0036038">
    <property type="term" value="C:MKS complex"/>
    <property type="evidence" value="ECO:0000314"/>
    <property type="project" value="UniProtKB"/>
</dbReference>
<dbReference type="GO" id="GO:0021956">
    <property type="term" value="P:central nervous system interneuron axonogenesis"/>
    <property type="evidence" value="ECO:0000315"/>
    <property type="project" value="MGI"/>
</dbReference>
<dbReference type="GO" id="GO:0060271">
    <property type="term" value="P:cilium assembly"/>
    <property type="evidence" value="ECO:0000315"/>
    <property type="project" value="UniProtKB"/>
</dbReference>
<dbReference type="GO" id="GO:0021904">
    <property type="term" value="P:dorsal/ventral neural tube patterning"/>
    <property type="evidence" value="ECO:0000315"/>
    <property type="project" value="MGI"/>
</dbReference>
<dbReference type="GO" id="GO:0001701">
    <property type="term" value="P:in utero embryonic development"/>
    <property type="evidence" value="ECO:0000315"/>
    <property type="project" value="MGI"/>
</dbReference>
<dbReference type="GO" id="GO:0001841">
    <property type="term" value="P:neural tube formation"/>
    <property type="evidence" value="ECO:0000315"/>
    <property type="project" value="MGI"/>
</dbReference>
<dbReference type="GO" id="GO:1904491">
    <property type="term" value="P:protein localization to ciliary transition zone"/>
    <property type="evidence" value="ECO:0000315"/>
    <property type="project" value="WormBase"/>
</dbReference>
<dbReference type="GO" id="GO:0008589">
    <property type="term" value="P:regulation of smoothened signaling pathway"/>
    <property type="evidence" value="ECO:0000315"/>
    <property type="project" value="MGI"/>
</dbReference>
<dbReference type="GO" id="GO:0021523">
    <property type="term" value="P:somatic motor neuron differentiation"/>
    <property type="evidence" value="ECO:0000315"/>
    <property type="project" value="MGI"/>
</dbReference>
<dbReference type="GO" id="GO:0021537">
    <property type="term" value="P:telencephalon development"/>
    <property type="evidence" value="ECO:0000315"/>
    <property type="project" value="MGI"/>
</dbReference>
<dbReference type="InterPro" id="IPR040354">
    <property type="entry name" value="Tectonic"/>
</dbReference>
<dbReference type="InterPro" id="IPR011677">
    <property type="entry name" value="Tectonic_dom"/>
</dbReference>
<dbReference type="PANTHER" id="PTHR14611">
    <property type="entry name" value="TECTONIC FAMILY MEMBER"/>
    <property type="match status" value="1"/>
</dbReference>
<dbReference type="PANTHER" id="PTHR14611:SF1">
    <property type="entry name" value="TECTONIC-1"/>
    <property type="match status" value="1"/>
</dbReference>
<dbReference type="Pfam" id="PF07773">
    <property type="entry name" value="TCTN_DUF1619"/>
    <property type="match status" value="1"/>
</dbReference>
<evidence type="ECO:0000255" key="1"/>
<evidence type="ECO:0000256" key="2">
    <source>
        <dbReference type="SAM" id="MobiDB-lite"/>
    </source>
</evidence>
<evidence type="ECO:0000269" key="3">
    <source>
    </source>
</evidence>
<evidence type="ECO:0000269" key="4">
    <source>
    </source>
</evidence>
<evidence type="ECO:0000269" key="5">
    <source>
    </source>
</evidence>
<evidence type="ECO:0000303" key="6">
    <source>
    </source>
</evidence>
<evidence type="ECO:0000305" key="7"/>
<evidence type="ECO:0007744" key="8">
    <source>
    </source>
</evidence>
<gene>
    <name type="primary">Tctn1</name>
    <name type="synonym">Tect1</name>
</gene>
<reference key="1">
    <citation type="journal article" date="2006" name="Genes Dev.">
        <title>Tectonic, a novel regulator of the Hedgehog pathway required for both activation and inhibition.</title>
        <authorList>
            <person name="Reiter J.F."/>
            <person name="Skarnes W.C."/>
        </authorList>
    </citation>
    <scope>NUCLEOTIDE SEQUENCE [MRNA] (ISOFORM 1)</scope>
    <scope>FUNCTION</scope>
    <scope>SUBCELLULAR LOCATION</scope>
    <scope>DEVELOPMENTAL STAGE</scope>
    <source>
        <strain>C57BL/6J</strain>
    </source>
</reference>
<reference key="2">
    <citation type="journal article" date="2005" name="Science">
        <title>The transcriptional landscape of the mammalian genome.</title>
        <authorList>
            <person name="Carninci P."/>
            <person name="Kasukawa T."/>
            <person name="Katayama S."/>
            <person name="Gough J."/>
            <person name="Frith M.C."/>
            <person name="Maeda N."/>
            <person name="Oyama R."/>
            <person name="Ravasi T."/>
            <person name="Lenhard B."/>
            <person name="Wells C."/>
            <person name="Kodzius R."/>
            <person name="Shimokawa K."/>
            <person name="Bajic V.B."/>
            <person name="Brenner S.E."/>
            <person name="Batalov S."/>
            <person name="Forrest A.R."/>
            <person name="Zavolan M."/>
            <person name="Davis M.J."/>
            <person name="Wilming L.G."/>
            <person name="Aidinis V."/>
            <person name="Allen J.E."/>
            <person name="Ambesi-Impiombato A."/>
            <person name="Apweiler R."/>
            <person name="Aturaliya R.N."/>
            <person name="Bailey T.L."/>
            <person name="Bansal M."/>
            <person name="Baxter L."/>
            <person name="Beisel K.W."/>
            <person name="Bersano T."/>
            <person name="Bono H."/>
            <person name="Chalk A.M."/>
            <person name="Chiu K.P."/>
            <person name="Choudhary V."/>
            <person name="Christoffels A."/>
            <person name="Clutterbuck D.R."/>
            <person name="Crowe M.L."/>
            <person name="Dalla E."/>
            <person name="Dalrymple B.P."/>
            <person name="de Bono B."/>
            <person name="Della Gatta G."/>
            <person name="di Bernardo D."/>
            <person name="Down T."/>
            <person name="Engstrom P."/>
            <person name="Fagiolini M."/>
            <person name="Faulkner G."/>
            <person name="Fletcher C.F."/>
            <person name="Fukushima T."/>
            <person name="Furuno M."/>
            <person name="Futaki S."/>
            <person name="Gariboldi M."/>
            <person name="Georgii-Hemming P."/>
            <person name="Gingeras T.R."/>
            <person name="Gojobori T."/>
            <person name="Green R.E."/>
            <person name="Gustincich S."/>
            <person name="Harbers M."/>
            <person name="Hayashi Y."/>
            <person name="Hensch T.K."/>
            <person name="Hirokawa N."/>
            <person name="Hill D."/>
            <person name="Huminiecki L."/>
            <person name="Iacono M."/>
            <person name="Ikeo K."/>
            <person name="Iwama A."/>
            <person name="Ishikawa T."/>
            <person name="Jakt M."/>
            <person name="Kanapin A."/>
            <person name="Katoh M."/>
            <person name="Kawasawa Y."/>
            <person name="Kelso J."/>
            <person name="Kitamura H."/>
            <person name="Kitano H."/>
            <person name="Kollias G."/>
            <person name="Krishnan S.P."/>
            <person name="Kruger A."/>
            <person name="Kummerfeld S.K."/>
            <person name="Kurochkin I.V."/>
            <person name="Lareau L.F."/>
            <person name="Lazarevic D."/>
            <person name="Lipovich L."/>
            <person name="Liu J."/>
            <person name="Liuni S."/>
            <person name="McWilliam S."/>
            <person name="Madan Babu M."/>
            <person name="Madera M."/>
            <person name="Marchionni L."/>
            <person name="Matsuda H."/>
            <person name="Matsuzawa S."/>
            <person name="Miki H."/>
            <person name="Mignone F."/>
            <person name="Miyake S."/>
            <person name="Morris K."/>
            <person name="Mottagui-Tabar S."/>
            <person name="Mulder N."/>
            <person name="Nakano N."/>
            <person name="Nakauchi H."/>
            <person name="Ng P."/>
            <person name="Nilsson R."/>
            <person name="Nishiguchi S."/>
            <person name="Nishikawa S."/>
            <person name="Nori F."/>
            <person name="Ohara O."/>
            <person name="Okazaki Y."/>
            <person name="Orlando V."/>
            <person name="Pang K.C."/>
            <person name="Pavan W.J."/>
            <person name="Pavesi G."/>
            <person name="Pesole G."/>
            <person name="Petrovsky N."/>
            <person name="Piazza S."/>
            <person name="Reed J."/>
            <person name="Reid J.F."/>
            <person name="Ring B.Z."/>
            <person name="Ringwald M."/>
            <person name="Rost B."/>
            <person name="Ruan Y."/>
            <person name="Salzberg S.L."/>
            <person name="Sandelin A."/>
            <person name="Schneider C."/>
            <person name="Schoenbach C."/>
            <person name="Sekiguchi K."/>
            <person name="Semple C.A."/>
            <person name="Seno S."/>
            <person name="Sessa L."/>
            <person name="Sheng Y."/>
            <person name="Shibata Y."/>
            <person name="Shimada H."/>
            <person name="Shimada K."/>
            <person name="Silva D."/>
            <person name="Sinclair B."/>
            <person name="Sperling S."/>
            <person name="Stupka E."/>
            <person name="Sugiura K."/>
            <person name="Sultana R."/>
            <person name="Takenaka Y."/>
            <person name="Taki K."/>
            <person name="Tammoja K."/>
            <person name="Tan S.L."/>
            <person name="Tang S."/>
            <person name="Taylor M.S."/>
            <person name="Tegner J."/>
            <person name="Teichmann S.A."/>
            <person name="Ueda H.R."/>
            <person name="van Nimwegen E."/>
            <person name="Verardo R."/>
            <person name="Wei C.L."/>
            <person name="Yagi K."/>
            <person name="Yamanishi H."/>
            <person name="Zabarovsky E."/>
            <person name="Zhu S."/>
            <person name="Zimmer A."/>
            <person name="Hide W."/>
            <person name="Bult C."/>
            <person name="Grimmond S.M."/>
            <person name="Teasdale R.D."/>
            <person name="Liu E.T."/>
            <person name="Brusic V."/>
            <person name="Quackenbush J."/>
            <person name="Wahlestedt C."/>
            <person name="Mattick J.S."/>
            <person name="Hume D.A."/>
            <person name="Kai C."/>
            <person name="Sasaki D."/>
            <person name="Tomaru Y."/>
            <person name="Fukuda S."/>
            <person name="Kanamori-Katayama M."/>
            <person name="Suzuki M."/>
            <person name="Aoki J."/>
            <person name="Arakawa T."/>
            <person name="Iida J."/>
            <person name="Imamura K."/>
            <person name="Itoh M."/>
            <person name="Kato T."/>
            <person name="Kawaji H."/>
            <person name="Kawagashira N."/>
            <person name="Kawashima T."/>
            <person name="Kojima M."/>
            <person name="Kondo S."/>
            <person name="Konno H."/>
            <person name="Nakano K."/>
            <person name="Ninomiya N."/>
            <person name="Nishio T."/>
            <person name="Okada M."/>
            <person name="Plessy C."/>
            <person name="Shibata K."/>
            <person name="Shiraki T."/>
            <person name="Suzuki S."/>
            <person name="Tagami M."/>
            <person name="Waki K."/>
            <person name="Watahiki A."/>
            <person name="Okamura-Oho Y."/>
            <person name="Suzuki H."/>
            <person name="Kawai J."/>
            <person name="Hayashizaki Y."/>
        </authorList>
    </citation>
    <scope>NUCLEOTIDE SEQUENCE [LARGE SCALE MRNA] (ISOFORMS 1 AND 2)</scope>
    <source>
        <strain>C57BL/6J</strain>
        <tissue>Bone</tissue>
        <tissue>Lung</tissue>
        <tissue>Mammary gland</tissue>
    </source>
</reference>
<reference key="3">
    <citation type="journal article" date="2011" name="Cell">
        <title>Mapping the NPHP-JBTS-MKS protein network reveals ciliopathy disease genes and pathways.</title>
        <authorList>
            <person name="Sang L."/>
            <person name="Miller J.J."/>
            <person name="Corbit K.C."/>
            <person name="Giles R.H."/>
            <person name="Brauer M.J."/>
            <person name="Otto E.A."/>
            <person name="Baye L.M."/>
            <person name="Wen X."/>
            <person name="Scales S.J."/>
            <person name="Kwong M."/>
            <person name="Huntzicker E.G."/>
            <person name="Sfakianos M.K."/>
            <person name="Sandoval W."/>
            <person name="Bazan J.F."/>
            <person name="Kulkarni P."/>
            <person name="Garcia-Gonzalo F.R."/>
            <person name="Seol A.D."/>
            <person name="O'Toole J.F."/>
            <person name="Held S."/>
            <person name="Reutter H.M."/>
            <person name="Lane W.S."/>
            <person name="Rafiq M.A."/>
            <person name="Noor A."/>
            <person name="Ansar M."/>
            <person name="Devi A.R."/>
            <person name="Sheffield V.C."/>
            <person name="Slusarski D.C."/>
            <person name="Vincent J.B."/>
            <person name="Doherty D.A."/>
            <person name="Hildebrandt F."/>
            <person name="Reiter J.F."/>
            <person name="Jackson P.K."/>
        </authorList>
    </citation>
    <scope>INTERACTION WITH MKS1</scope>
</reference>
<reference key="4">
    <citation type="journal article" date="2012" name="Nat. Cell Biol.">
        <title>A ciliopathy complex at the transition zone protects the cilia as a privileged membrane domain.</title>
        <authorList>
            <person name="Chih B."/>
            <person name="Liu P."/>
            <person name="Chinn Y."/>
            <person name="Chalouni C."/>
            <person name="Komuves L.G."/>
            <person name="Hass P.E."/>
            <person name="Sandoval W."/>
            <person name="Peterson A.S."/>
        </authorList>
    </citation>
    <scope>IDENTIFICATION IN THE TECTONIC-LIKE COMPLEX</scope>
    <scope>FUNCTION</scope>
</reference>
<reference key="5">
    <citation type="journal article" date="2011" name="Nat. Genet.">
        <title>A transition zone complex regulates mammalian ciliogenesis and ciliary membrane composition.</title>
        <authorList>
            <person name="Garcia-Gonzalo F.R."/>
            <person name="Corbit K.C."/>
            <person name="Sirerol-Piquer M.S."/>
            <person name="Ramaswami G."/>
            <person name="Otto E.A."/>
            <person name="Noriega T.R."/>
            <person name="Seol A.D."/>
            <person name="Robinson J.F."/>
            <person name="Bennett C.L."/>
            <person name="Josifova D.J."/>
            <person name="Garcia-Verdugo J.M."/>
            <person name="Katsanis N."/>
            <person name="Hildebrandt F."/>
            <person name="Reiter J.F."/>
        </authorList>
    </citation>
    <scope>FUNCTION</scope>
    <scope>DISRUPTION PHENOTYPE</scope>
    <scope>SUBCELLULAR LOCATION</scope>
    <scope>IDENTIFICATION IN THE TECTONIC-LIKE COMPLEX</scope>
</reference>
<reference key="6">
    <citation type="journal article" date="2014" name="Mol. Cell. Proteomics">
        <title>Immunoaffinity enrichment and mass spectrometry analysis of protein methylation.</title>
        <authorList>
            <person name="Guo A."/>
            <person name="Gu H."/>
            <person name="Zhou J."/>
            <person name="Mulhern D."/>
            <person name="Wang Y."/>
            <person name="Lee K.A."/>
            <person name="Yang V."/>
            <person name="Aguiar M."/>
            <person name="Kornhauser J."/>
            <person name="Jia X."/>
            <person name="Ren J."/>
            <person name="Beausoleil S.A."/>
            <person name="Silva J.C."/>
            <person name="Vemulapalli V."/>
            <person name="Bedford M.T."/>
            <person name="Comb M.J."/>
        </authorList>
    </citation>
    <scope>METHYLATION [LARGE SCALE ANALYSIS] AT ARG-486</scope>
    <scope>IDENTIFICATION BY MASS SPECTROMETRY [LARGE SCALE ANALYSIS]</scope>
    <source>
        <tissue>Embryo</tissue>
    </source>
</reference>
<sequence length="593" mass="63447">MGSRGLPPLLLVLLNCYTSSSTQVIAIPAAATPAVTKEDLNSTKATPTTLQPSLSPRTPGTPRAPERSGPRPTPVTDVAALCVCDLLPAQCDVNCCCDPDCSPADFSIFSACSVPVVTGDRQFCSQKAAFYSMNLTADPPHRDFKLIDQINPSVFCIHISNYKPALSFANPEVPDENNFDRLMQTSGGFTLSAESAVPSTAASDGPQPTKYEYGAPLQTAGASSGSFLKLPSPLTSSLCADQNPAAFLVSQAFECSRRVDIEQCEGMEALSMAHYSSPAILRVPNSMTQVSIKIQSVMYRSLNHTLTQLEGHGVLRPSLVSTGQDRLCSNVVLQVKYSLLYTATGQIHEAGLSLVLGTLSSAVSLLQQKFEIHFIQHGTKPVPLSGNPGYRVGLPLAAGFQPQKGSGIIQTTNRQGQFTILRSTSQQDCLASEGLRTPVLFGYNVQSGCQLRLTGTIPCGLLAQKVQDLLRGQAFPDYVAAFGNSRAQDVQDWVPVHFVTYSSNMKGSCQLPVALAIEVKWTKYGSLLNPQARIVNVTAQLVSVPEPLPGPERTVVISTAVTFVDVSAPAEAGFRAPPTINARLPFSFFFPFV</sequence>
<comment type="function">
    <text evidence="3 4 5">Component of the tectonic-like complex, a complex localized at the transition zone of primary cilia and acting as a barrier that prevents diffusion of transmembrane proteins between the cilia and plasma membranes. Regulator of Hedgehog (Hh), required for both activation and inhibition of the Hh pathway in the patterning of the neural tube. During neural tube development, it is required for formation of the most ventral cell types and for full Hh pathway activation. Functions in Hh signal transduction to fully activate the pathway in the presence of high Hh levels and to repress the pathway in the absence of Hh signals. Modulates Hh signal transduction downstream of SMO and RAB23.</text>
</comment>
<comment type="subunit">
    <text evidence="4 5">Part of the tectonic-like complex (also named B9 complex).</text>
</comment>
<comment type="subcellular location">
    <subcellularLocation>
        <location>Cytoplasm</location>
        <location>Cytoskeleton</location>
        <location>Cilium basal body</location>
    </subcellularLocation>
    <subcellularLocation>
        <location>Secreted</location>
    </subcellularLocation>
    <text evidence="3">Localizes at the transition zone, a region between the basal body and the ciliary axoneme. Despite the presence of a signal sequence, the full-length protein might not be secreted (PubMed:16357211).</text>
</comment>
<comment type="alternative products">
    <event type="alternative splicing"/>
    <isoform>
        <id>Q8BZ64-1</id>
        <name>1</name>
        <sequence type="displayed"/>
    </isoform>
    <isoform>
        <id>Q8BZ64-2</id>
        <name>2</name>
        <sequence type="described" ref="VSP_017764 VSP_017765"/>
    </isoform>
</comment>
<comment type="developmental stage">
    <text evidence="3">During embryonic development, it is expressed in regions that participate in Hedgehog signaling. First expressed during gastrulation stages in the ventral node. At 9.5 dpc, expressed in the gut endoderm, limb buds, notochord, somites, neural tube and floorplate.</text>
</comment>
<comment type="disruption phenotype">
    <text evidence="4">Null animals show disruption of nodal flow, laterality defects, and neural tube dorsalization. Basal bodies dock to the cellular plasma membrane, but fail to extend axonemes. However, cilia are present in the notochord, early gut epithelium, and mesenchymal cells surrounding the neural tube and in the limb bud. Null embryos develop an extra preaxial digit on 1 or both hindlimbs. Although sonic hedgehog (Shh) expression is normal, downstream signaling is disturbed, suggesting that Tctn1 is required for cilium-dependent Shh signal transduction.</text>
</comment>
<comment type="miscellaneous">
    <text>Was named 'Tectonic' after the Greek word for builder.</text>
</comment>
<comment type="similarity">
    <text evidence="7">Belongs to the tectonic family.</text>
</comment>
<comment type="sequence caution" evidence="7">
    <conflict type="frameshift">
        <sequence resource="EMBL-CDS" id="BAE26058"/>
    </conflict>
</comment>
<protein>
    <recommendedName>
        <fullName>Tectonic-1</fullName>
    </recommendedName>
</protein>
<proteinExistence type="evidence at protein level"/>
<keyword id="KW-0025">Alternative splicing</keyword>
<keyword id="KW-0966">Cell projection</keyword>
<keyword id="KW-0970">Cilium biogenesis/degradation</keyword>
<keyword id="KW-0963">Cytoplasm</keyword>
<keyword id="KW-0206">Cytoskeleton</keyword>
<keyword id="KW-0217">Developmental protein</keyword>
<keyword id="KW-0325">Glycoprotein</keyword>
<keyword id="KW-0488">Methylation</keyword>
<keyword id="KW-1185">Reference proteome</keyword>
<keyword id="KW-0964">Secreted</keyword>
<keyword id="KW-0732">Signal</keyword>
<feature type="signal peptide" evidence="1">
    <location>
        <begin position="1"/>
        <end position="22"/>
    </location>
</feature>
<feature type="chain" id="PRO_0000229797" description="Tectonic-1">
    <location>
        <begin position="23"/>
        <end position="593"/>
    </location>
</feature>
<feature type="region of interest" description="Disordered" evidence="2">
    <location>
        <begin position="37"/>
        <end position="72"/>
    </location>
</feature>
<feature type="compositionally biased region" description="Polar residues" evidence="2">
    <location>
        <begin position="42"/>
        <end position="58"/>
    </location>
</feature>
<feature type="modified residue" description="Omega-N-methylarginine" evidence="8">
    <location>
        <position position="486"/>
    </location>
</feature>
<feature type="glycosylation site" description="N-linked (GlcNAc...) asparagine" evidence="1">
    <location>
        <position position="41"/>
    </location>
</feature>
<feature type="glycosylation site" description="N-linked (GlcNAc...) asparagine" evidence="1">
    <location>
        <position position="303"/>
    </location>
</feature>
<feature type="glycosylation site" description="N-linked (GlcNAc...) asparagine" evidence="1">
    <location>
        <position position="536"/>
    </location>
</feature>
<feature type="splice variant" id="VSP_017764" description="In isoform 2." evidence="6">
    <original>YKPALSFANPEVPDENNFDRLMQTSGGFTLSAES</original>
    <variation>LWSPSADCRSIFRVISETALASHVISVCRSEPRR</variation>
    <location>
        <begin position="162"/>
        <end position="195"/>
    </location>
</feature>
<feature type="splice variant" id="VSP_017765" description="In isoform 2." evidence="6">
    <location>
        <begin position="196"/>
        <end position="593"/>
    </location>
</feature>
<organism>
    <name type="scientific">Mus musculus</name>
    <name type="common">Mouse</name>
    <dbReference type="NCBI Taxonomy" id="10090"/>
    <lineage>
        <taxon>Eukaryota</taxon>
        <taxon>Metazoa</taxon>
        <taxon>Chordata</taxon>
        <taxon>Craniata</taxon>
        <taxon>Vertebrata</taxon>
        <taxon>Euteleostomi</taxon>
        <taxon>Mammalia</taxon>
        <taxon>Eutheria</taxon>
        <taxon>Euarchontoglires</taxon>
        <taxon>Glires</taxon>
        <taxon>Rodentia</taxon>
        <taxon>Myomorpha</taxon>
        <taxon>Muroidea</taxon>
        <taxon>Muridae</taxon>
        <taxon>Murinae</taxon>
        <taxon>Mus</taxon>
        <taxon>Mus</taxon>
    </lineage>
</organism>